<gene>
    <name type="primary">glod5</name>
</gene>
<proteinExistence type="evidence at transcript level"/>
<organism>
    <name type="scientific">Xenopus laevis</name>
    <name type="common">African clawed frog</name>
    <dbReference type="NCBI Taxonomy" id="8355"/>
    <lineage>
        <taxon>Eukaryota</taxon>
        <taxon>Metazoa</taxon>
        <taxon>Chordata</taxon>
        <taxon>Craniata</taxon>
        <taxon>Vertebrata</taxon>
        <taxon>Euteleostomi</taxon>
        <taxon>Amphibia</taxon>
        <taxon>Batrachia</taxon>
        <taxon>Anura</taxon>
        <taxon>Pipoidea</taxon>
        <taxon>Pipidae</taxon>
        <taxon>Xenopodinae</taxon>
        <taxon>Xenopus</taxon>
        <taxon>Xenopus</taxon>
    </lineage>
</organism>
<protein>
    <recommendedName>
        <fullName>Glyoxalase domain-containing protein 5</fullName>
    </recommendedName>
</protein>
<dbReference type="EMBL" id="BC099314">
    <property type="protein sequence ID" value="AAH99314.1"/>
    <property type="status" value="ALT_INIT"/>
    <property type="molecule type" value="mRNA"/>
</dbReference>
<dbReference type="EMBL" id="BC106199">
    <property type="protein sequence ID" value="AAI06200.1"/>
    <property type="status" value="ALT_INIT"/>
    <property type="molecule type" value="mRNA"/>
</dbReference>
<dbReference type="SMR" id="Q4KLB0"/>
<dbReference type="AGR" id="Xenbase:XB-GENE-5881482"/>
<dbReference type="Xenbase" id="XB-GENE-5881482">
    <property type="gene designation" value="glod5.L"/>
</dbReference>
<dbReference type="Proteomes" id="UP000186698">
    <property type="component" value="Unplaced"/>
</dbReference>
<dbReference type="CDD" id="cd07253">
    <property type="entry name" value="GLOD5"/>
    <property type="match status" value="1"/>
</dbReference>
<dbReference type="Gene3D" id="3.10.180.10">
    <property type="entry name" value="2,3-Dihydroxybiphenyl 1,2-Dioxygenase, domain 1"/>
    <property type="match status" value="1"/>
</dbReference>
<dbReference type="InterPro" id="IPR029068">
    <property type="entry name" value="Glyas_Bleomycin-R_OHBP_Dase"/>
</dbReference>
<dbReference type="InterPro" id="IPR004360">
    <property type="entry name" value="Glyas_Fos-R_dOase_dom"/>
</dbReference>
<dbReference type="InterPro" id="IPR050383">
    <property type="entry name" value="GlyoxalaseI/FosfomycinResist"/>
</dbReference>
<dbReference type="InterPro" id="IPR037523">
    <property type="entry name" value="VOC"/>
</dbReference>
<dbReference type="PANTHER" id="PTHR21366:SF14">
    <property type="entry name" value="GLYOXALASE DOMAIN-CONTAINING PROTEIN 5"/>
    <property type="match status" value="1"/>
</dbReference>
<dbReference type="PANTHER" id="PTHR21366">
    <property type="entry name" value="GLYOXALASE FAMILY PROTEIN"/>
    <property type="match status" value="1"/>
</dbReference>
<dbReference type="Pfam" id="PF00903">
    <property type="entry name" value="Glyoxalase"/>
    <property type="match status" value="1"/>
</dbReference>
<dbReference type="SUPFAM" id="SSF54593">
    <property type="entry name" value="Glyoxalase/Bleomycin resistance protein/Dihydroxybiphenyl dioxygenase"/>
    <property type="match status" value="1"/>
</dbReference>
<dbReference type="PROSITE" id="PS51819">
    <property type="entry name" value="VOC"/>
    <property type="match status" value="1"/>
</dbReference>
<reference key="1">
    <citation type="submission" date="2005-10" db="EMBL/GenBank/DDBJ databases">
        <authorList>
            <consortium name="NIH - Xenopus Gene Collection (XGC) project"/>
        </authorList>
    </citation>
    <scope>NUCLEOTIDE SEQUENCE [LARGE SCALE MRNA]</scope>
    <source>
        <tissue>Embryo</tissue>
    </source>
</reference>
<sequence>MLPLCRLLSRRAQVPSHLSRCLSDSRPPFRIQRLDHLVLTVRNLDKTIKFYTKVLGMEATTFKGGRKALSFGIQKINLHETGKEFEPKASLPTPGSADLCLITETPLTTVVQHLKVCGVPIEEGPVSRTGAVGEITSVYLRDPDHNLIEVSNYESNDKKN</sequence>
<comment type="similarity">
    <text evidence="2">Belongs to the glyoxalase I family.</text>
</comment>
<comment type="sequence caution" evidence="2">
    <conflict type="erroneous initiation">
        <sequence resource="EMBL-CDS" id="AAH99314"/>
    </conflict>
</comment>
<comment type="sequence caution" evidence="2">
    <conflict type="erroneous initiation">
        <sequence resource="EMBL-CDS" id="AAI06200"/>
    </conflict>
</comment>
<accession>Q4KLB0</accession>
<accession>Q3KQH6</accession>
<evidence type="ECO:0000255" key="1">
    <source>
        <dbReference type="PROSITE-ProRule" id="PRU01163"/>
    </source>
</evidence>
<evidence type="ECO:0000305" key="2"/>
<name>GLOD5_XENLA</name>
<keyword id="KW-1185">Reference proteome</keyword>
<feature type="chain" id="PRO_0000305329" description="Glyoxalase domain-containing protein 5">
    <location>
        <begin position="1"/>
        <end position="160"/>
    </location>
</feature>
<feature type="domain" description="VOC" evidence="1">
    <location>
        <begin position="33"/>
        <end position="153"/>
    </location>
</feature>